<sequence>MPIGVPRVPFRTPGDRDASWVDILINRLYRERLLFLGQDVDSEISNQLISLMIYLSIEKENKDLYLFINSPGGWVIPGIALYDTMQFVQPDVQTVCLGLAASMGSFLLAGGTITKRLAFPHAMIHQPASSFYEAQAGEFILEAEELLKMRETITRVYVQRTGKSLWVISEDMERDVFMSAAEAQAHGIVDLVAVE</sequence>
<organism>
    <name type="scientific">Phaseolus vulgaris</name>
    <name type="common">Kidney bean</name>
    <name type="synonym">French bean</name>
    <dbReference type="NCBI Taxonomy" id="3885"/>
    <lineage>
        <taxon>Eukaryota</taxon>
        <taxon>Viridiplantae</taxon>
        <taxon>Streptophyta</taxon>
        <taxon>Embryophyta</taxon>
        <taxon>Tracheophyta</taxon>
        <taxon>Spermatophyta</taxon>
        <taxon>Magnoliopsida</taxon>
        <taxon>eudicotyledons</taxon>
        <taxon>Gunneridae</taxon>
        <taxon>Pentapetalae</taxon>
        <taxon>rosids</taxon>
        <taxon>fabids</taxon>
        <taxon>Fabales</taxon>
        <taxon>Fabaceae</taxon>
        <taxon>Papilionoideae</taxon>
        <taxon>50 kb inversion clade</taxon>
        <taxon>NPAAA clade</taxon>
        <taxon>indigoferoid/millettioid clade</taxon>
        <taxon>Phaseoleae</taxon>
        <taxon>Phaseolus</taxon>
    </lineage>
</organism>
<evidence type="ECO:0000255" key="1">
    <source>
        <dbReference type="HAMAP-Rule" id="MF_00444"/>
    </source>
</evidence>
<evidence type="ECO:0000305" key="2"/>
<feature type="chain" id="PRO_0000309309" description="ATP-dependent Clp protease proteolytic subunit">
    <location>
        <begin position="1"/>
        <end position="195"/>
    </location>
</feature>
<feature type="active site" description="Nucleophile" evidence="1">
    <location>
        <position position="102"/>
    </location>
</feature>
<feature type="active site" evidence="1">
    <location>
        <position position="125"/>
    </location>
</feature>
<feature type="sequence conflict" description="In Ref. 2; ABW22759." evidence="2" ref="2">
    <original>LI</original>
    <variation>Y</variation>
    <location>
        <begin position="24"/>
        <end position="25"/>
    </location>
</feature>
<feature type="sequence conflict" description="In Ref. 2; ABW22759." evidence="2" ref="2">
    <original>A</original>
    <variation>ARV</variation>
    <location>
        <position position="122"/>
    </location>
</feature>
<dbReference type="EC" id="3.4.21.92" evidence="1"/>
<dbReference type="EMBL" id="DQ886273">
    <property type="protein sequence ID" value="ABH88110.1"/>
    <property type="molecule type" value="Genomic_DNA"/>
</dbReference>
<dbReference type="EMBL" id="EU196765">
    <property type="protein sequence ID" value="ABW22759.1"/>
    <property type="molecule type" value="Genomic_DNA"/>
</dbReference>
<dbReference type="RefSeq" id="YP_001122831.1">
    <property type="nucleotide sequence ID" value="NC_009259.1"/>
</dbReference>
<dbReference type="SMR" id="A4GGD0"/>
<dbReference type="MEROPS" id="S14.002"/>
<dbReference type="GeneID" id="4961758"/>
<dbReference type="KEGG" id="pvu:4961758"/>
<dbReference type="eggNOG" id="KOG0840">
    <property type="taxonomic scope" value="Eukaryota"/>
</dbReference>
<dbReference type="GO" id="GO:0009570">
    <property type="term" value="C:chloroplast stroma"/>
    <property type="evidence" value="ECO:0007669"/>
    <property type="project" value="UniProtKB-SubCell"/>
</dbReference>
<dbReference type="GO" id="GO:0009368">
    <property type="term" value="C:endopeptidase Clp complex"/>
    <property type="evidence" value="ECO:0007669"/>
    <property type="project" value="TreeGrafter"/>
</dbReference>
<dbReference type="GO" id="GO:0004176">
    <property type="term" value="F:ATP-dependent peptidase activity"/>
    <property type="evidence" value="ECO:0007669"/>
    <property type="project" value="InterPro"/>
</dbReference>
<dbReference type="GO" id="GO:0051117">
    <property type="term" value="F:ATPase binding"/>
    <property type="evidence" value="ECO:0007669"/>
    <property type="project" value="TreeGrafter"/>
</dbReference>
<dbReference type="GO" id="GO:0004252">
    <property type="term" value="F:serine-type endopeptidase activity"/>
    <property type="evidence" value="ECO:0007669"/>
    <property type="project" value="UniProtKB-UniRule"/>
</dbReference>
<dbReference type="GO" id="GO:0006515">
    <property type="term" value="P:protein quality control for misfolded or incompletely synthesized proteins"/>
    <property type="evidence" value="ECO:0007669"/>
    <property type="project" value="TreeGrafter"/>
</dbReference>
<dbReference type="CDD" id="cd07017">
    <property type="entry name" value="S14_ClpP_2"/>
    <property type="match status" value="1"/>
</dbReference>
<dbReference type="FunFam" id="3.90.226.10:FF:000006">
    <property type="entry name" value="ATP-dependent Clp protease proteolytic subunit"/>
    <property type="match status" value="1"/>
</dbReference>
<dbReference type="Gene3D" id="3.90.226.10">
    <property type="entry name" value="2-enoyl-CoA Hydratase, Chain A, domain 1"/>
    <property type="match status" value="1"/>
</dbReference>
<dbReference type="HAMAP" id="MF_00444">
    <property type="entry name" value="ClpP"/>
    <property type="match status" value="1"/>
</dbReference>
<dbReference type="InterPro" id="IPR001907">
    <property type="entry name" value="ClpP"/>
</dbReference>
<dbReference type="InterPro" id="IPR029045">
    <property type="entry name" value="ClpP/crotonase-like_dom_sf"/>
</dbReference>
<dbReference type="InterPro" id="IPR023562">
    <property type="entry name" value="ClpP/TepA"/>
</dbReference>
<dbReference type="InterPro" id="IPR018215">
    <property type="entry name" value="ClpP_Ser_AS"/>
</dbReference>
<dbReference type="PANTHER" id="PTHR10381">
    <property type="entry name" value="ATP-DEPENDENT CLP PROTEASE PROTEOLYTIC SUBUNIT"/>
    <property type="match status" value="1"/>
</dbReference>
<dbReference type="PANTHER" id="PTHR10381:SF15">
    <property type="entry name" value="CHLOROPLASTIC ATP-DEPENDENT CLP PROTEASE PROTEOLYTIC SUBUNIT 1"/>
    <property type="match status" value="1"/>
</dbReference>
<dbReference type="Pfam" id="PF00574">
    <property type="entry name" value="CLP_protease"/>
    <property type="match status" value="1"/>
</dbReference>
<dbReference type="PRINTS" id="PR00127">
    <property type="entry name" value="CLPPROTEASEP"/>
</dbReference>
<dbReference type="SUPFAM" id="SSF52096">
    <property type="entry name" value="ClpP/crotonase"/>
    <property type="match status" value="1"/>
</dbReference>
<dbReference type="PROSITE" id="PS00381">
    <property type="entry name" value="CLP_PROTEASE_SER"/>
    <property type="match status" value="1"/>
</dbReference>
<reference key="1">
    <citation type="journal article" date="2007" name="BMC Genomics">
        <title>Rapid evolutionary change of common bean (Phaseolus vulgaris L) plastome, and the genomic diversification of legume chloroplasts.</title>
        <authorList>
            <person name="Guo X."/>
            <person name="Castillo-Ramirez S."/>
            <person name="Gonzalez V."/>
            <person name="Bustos P."/>
            <person name="Fernandez-Vazquez J.L."/>
            <person name="Santamaria R.I."/>
            <person name="Arellano J."/>
            <person name="Cevallos M.A."/>
            <person name="Davila G."/>
        </authorList>
    </citation>
    <scope>NUCLEOTIDE SEQUENCE [LARGE SCALE GENOMIC DNA]</scope>
    <source>
        <strain>cv. Negro Jamapa</strain>
    </source>
</reference>
<reference key="2">
    <citation type="submission" date="2007-10" db="EMBL/GenBank/DDBJ databases">
        <title>Complete nucleotide sequence of the plastid genome of the common bean, Phaseolus vulgaris.</title>
        <authorList>
            <person name="Moore M.J."/>
            <person name="Triplett E.W."/>
            <person name="Broughton W.J."/>
            <person name="Soltis P.S."/>
            <person name="Soltis D.E."/>
        </authorList>
    </citation>
    <scope>NUCLEOTIDE SEQUENCE [LARGE SCALE GENOMIC DNA]</scope>
</reference>
<comment type="function">
    <text evidence="1">Cleaves peptides in various proteins in a process that requires ATP hydrolysis. Has a chymotrypsin-like activity. Plays a major role in the degradation of misfolded proteins.</text>
</comment>
<comment type="catalytic activity">
    <reaction evidence="1">
        <text>Hydrolysis of proteins to small peptides in the presence of ATP and magnesium. alpha-casein is the usual test substrate. In the absence of ATP, only oligopeptides shorter than five residues are hydrolyzed (such as succinyl-Leu-Tyr-|-NHMec, and Leu-Tyr-Leu-|-Tyr-Trp, in which cleavage of the -Tyr-|-Leu- and -Tyr-|-Trp bonds also occurs).</text>
        <dbReference type="EC" id="3.4.21.92"/>
    </reaction>
</comment>
<comment type="subunit">
    <text>Component of the chloroplastic Clp protease core complex.</text>
</comment>
<comment type="subcellular location">
    <subcellularLocation>
        <location evidence="1">Plastid</location>
        <location evidence="1">Chloroplast stroma</location>
    </subcellularLocation>
</comment>
<comment type="similarity">
    <text evidence="1">Belongs to the peptidase S14 family.</text>
</comment>
<proteinExistence type="inferred from homology"/>
<protein>
    <recommendedName>
        <fullName evidence="1">ATP-dependent Clp protease proteolytic subunit</fullName>
        <ecNumber evidence="1">3.4.21.92</ecNumber>
    </recommendedName>
    <alternativeName>
        <fullName evidence="1">Endopeptidase Clp</fullName>
    </alternativeName>
</protein>
<geneLocation type="chloroplast"/>
<keyword id="KW-0150">Chloroplast</keyword>
<keyword id="KW-0378">Hydrolase</keyword>
<keyword id="KW-0934">Plastid</keyword>
<keyword id="KW-0645">Protease</keyword>
<keyword id="KW-0720">Serine protease</keyword>
<name>CLPP_PHAVU</name>
<gene>
    <name evidence="1" type="primary">clpP</name>
</gene>
<accession>A4GGD0</accession>
<accession>A8W7Y7</accession>